<sequence length="320" mass="33586">MARNKIALIGSGMIGGTLAHLAGLKELGDIVLFDIADGIPQGKGLDIAQSSPVEGFDANLTGASDYSAIEGADVCIVTAGVPRKPGMSRDDLLGINLKVMEQVGAGIKKYAPNAFVICITNPLDAMVWALQKFSGLPANKVVGMAGVLDSSRFRLFLAKEFNVSVQDVTAFVLGGHGDTMVPLARYSTVGGIPLTDLVTMGWVTKERLEEIIQRTRDGGAEIVGLLKTGSAYYAPAASAIEMAESYLKDKKRVLPCAAHLTGQYGVKDMYVGVPTVIGAGGVERVIEIDLNKTEKEAFDKSVAAVAGLCEACINIAPALK</sequence>
<feature type="chain" id="PRO_0000241960" description="Malate dehydrogenase">
    <location>
        <begin position="1"/>
        <end position="320"/>
    </location>
</feature>
<feature type="active site" description="Proton acceptor" evidence="1">
    <location>
        <position position="176"/>
    </location>
</feature>
<feature type="binding site" evidence="1">
    <location>
        <begin position="10"/>
        <end position="15"/>
    </location>
    <ligand>
        <name>NAD(+)</name>
        <dbReference type="ChEBI" id="CHEBI:57540"/>
    </ligand>
</feature>
<feature type="binding site" evidence="1">
    <location>
        <position position="34"/>
    </location>
    <ligand>
        <name>NAD(+)</name>
        <dbReference type="ChEBI" id="CHEBI:57540"/>
    </ligand>
</feature>
<feature type="binding site" evidence="1">
    <location>
        <position position="83"/>
    </location>
    <ligand>
        <name>substrate</name>
    </ligand>
</feature>
<feature type="binding site" evidence="1">
    <location>
        <position position="89"/>
    </location>
    <ligand>
        <name>substrate</name>
    </ligand>
</feature>
<feature type="binding site" evidence="1">
    <location>
        <position position="96"/>
    </location>
    <ligand>
        <name>NAD(+)</name>
        <dbReference type="ChEBI" id="CHEBI:57540"/>
    </ligand>
</feature>
<feature type="binding site" evidence="1">
    <location>
        <begin position="119"/>
        <end position="121"/>
    </location>
    <ligand>
        <name>NAD(+)</name>
        <dbReference type="ChEBI" id="CHEBI:57540"/>
    </ligand>
</feature>
<feature type="binding site" evidence="1">
    <location>
        <position position="121"/>
    </location>
    <ligand>
        <name>substrate</name>
    </ligand>
</feature>
<feature type="binding site" evidence="1">
    <location>
        <position position="152"/>
    </location>
    <ligand>
        <name>substrate</name>
    </ligand>
</feature>
<reference key="1">
    <citation type="journal article" date="2006" name="Proc. Natl. Acad. Sci. U.S.A.">
        <title>The partitioned Rhizobium etli genome: genetic and metabolic redundancy in seven interacting replicons.</title>
        <authorList>
            <person name="Gonzalez V."/>
            <person name="Santamaria R.I."/>
            <person name="Bustos P."/>
            <person name="Hernandez-Gonzalez I."/>
            <person name="Medrano-Soto A."/>
            <person name="Moreno-Hagelsieb G."/>
            <person name="Janga S.C."/>
            <person name="Ramirez M.A."/>
            <person name="Jimenez-Jacinto V."/>
            <person name="Collado-Vides J."/>
            <person name="Davila G."/>
        </authorList>
    </citation>
    <scope>NUCLEOTIDE SEQUENCE [LARGE SCALE GENOMIC DNA]</scope>
    <source>
        <strain>ATCC 51251 / DSM 11541 / JCM 21823 / NBRC 15573 / CFN 42</strain>
    </source>
</reference>
<organism>
    <name type="scientific">Rhizobium etli (strain ATCC 51251 / DSM 11541 / JCM 21823 / NBRC 15573 / CFN 42)</name>
    <dbReference type="NCBI Taxonomy" id="347834"/>
    <lineage>
        <taxon>Bacteria</taxon>
        <taxon>Pseudomonadati</taxon>
        <taxon>Pseudomonadota</taxon>
        <taxon>Alphaproteobacteria</taxon>
        <taxon>Hyphomicrobiales</taxon>
        <taxon>Rhizobiaceae</taxon>
        <taxon>Rhizobium/Agrobacterium group</taxon>
        <taxon>Rhizobium</taxon>
    </lineage>
</organism>
<evidence type="ECO:0000255" key="1">
    <source>
        <dbReference type="HAMAP-Rule" id="MF_00487"/>
    </source>
</evidence>
<comment type="function">
    <text evidence="1">Catalyzes the reversible oxidation of malate to oxaloacetate.</text>
</comment>
<comment type="catalytic activity">
    <reaction evidence="1">
        <text>(S)-malate + NAD(+) = oxaloacetate + NADH + H(+)</text>
        <dbReference type="Rhea" id="RHEA:21432"/>
        <dbReference type="ChEBI" id="CHEBI:15378"/>
        <dbReference type="ChEBI" id="CHEBI:15589"/>
        <dbReference type="ChEBI" id="CHEBI:16452"/>
        <dbReference type="ChEBI" id="CHEBI:57540"/>
        <dbReference type="ChEBI" id="CHEBI:57945"/>
        <dbReference type="EC" id="1.1.1.37"/>
    </reaction>
</comment>
<comment type="similarity">
    <text evidence="1">Belongs to the LDH/MDH superfamily. MDH type 3 family.</text>
</comment>
<proteinExistence type="inferred from homology"/>
<gene>
    <name evidence="1" type="primary">mdh</name>
    <name type="ordered locus">RHE_CH03891</name>
</gene>
<accession>Q2K3E9</accession>
<protein>
    <recommendedName>
        <fullName evidence="1">Malate dehydrogenase</fullName>
        <ecNumber evidence="1">1.1.1.37</ecNumber>
    </recommendedName>
</protein>
<keyword id="KW-0520">NAD</keyword>
<keyword id="KW-0560">Oxidoreductase</keyword>
<keyword id="KW-1185">Reference proteome</keyword>
<keyword id="KW-0816">Tricarboxylic acid cycle</keyword>
<dbReference type="EC" id="1.1.1.37" evidence="1"/>
<dbReference type="EMBL" id="CP000133">
    <property type="protein sequence ID" value="ABC92637.1"/>
    <property type="molecule type" value="Genomic_DNA"/>
</dbReference>
<dbReference type="RefSeq" id="WP_004679265.1">
    <property type="nucleotide sequence ID" value="NC_007761.1"/>
</dbReference>
<dbReference type="SMR" id="Q2K3E9"/>
<dbReference type="GeneID" id="66139454"/>
<dbReference type="KEGG" id="ret:RHE_CH03891"/>
<dbReference type="eggNOG" id="COG0039">
    <property type="taxonomic scope" value="Bacteria"/>
</dbReference>
<dbReference type="HOGENOM" id="CLU_045401_2_1_5"/>
<dbReference type="OrthoDB" id="9802969at2"/>
<dbReference type="Proteomes" id="UP000001936">
    <property type="component" value="Chromosome"/>
</dbReference>
<dbReference type="GO" id="GO:0004459">
    <property type="term" value="F:L-lactate dehydrogenase activity"/>
    <property type="evidence" value="ECO:0007669"/>
    <property type="project" value="TreeGrafter"/>
</dbReference>
<dbReference type="GO" id="GO:0030060">
    <property type="term" value="F:L-malate dehydrogenase (NAD+) activity"/>
    <property type="evidence" value="ECO:0007669"/>
    <property type="project" value="UniProtKB-UniRule"/>
</dbReference>
<dbReference type="GO" id="GO:0006089">
    <property type="term" value="P:lactate metabolic process"/>
    <property type="evidence" value="ECO:0007669"/>
    <property type="project" value="TreeGrafter"/>
</dbReference>
<dbReference type="GO" id="GO:0006099">
    <property type="term" value="P:tricarboxylic acid cycle"/>
    <property type="evidence" value="ECO:0007669"/>
    <property type="project" value="UniProtKB-UniRule"/>
</dbReference>
<dbReference type="CDD" id="cd01339">
    <property type="entry name" value="LDH-like_MDH"/>
    <property type="match status" value="1"/>
</dbReference>
<dbReference type="FunFam" id="3.40.50.720:FF:000018">
    <property type="entry name" value="Malate dehydrogenase"/>
    <property type="match status" value="1"/>
</dbReference>
<dbReference type="FunFam" id="3.90.110.10:FF:000004">
    <property type="entry name" value="Malate dehydrogenase"/>
    <property type="match status" value="1"/>
</dbReference>
<dbReference type="Gene3D" id="3.90.110.10">
    <property type="entry name" value="Lactate dehydrogenase/glycoside hydrolase, family 4, C-terminal"/>
    <property type="match status" value="1"/>
</dbReference>
<dbReference type="Gene3D" id="3.40.50.720">
    <property type="entry name" value="NAD(P)-binding Rossmann-like Domain"/>
    <property type="match status" value="1"/>
</dbReference>
<dbReference type="HAMAP" id="MF_00487">
    <property type="entry name" value="Malate_dehydrog_3"/>
    <property type="match status" value="1"/>
</dbReference>
<dbReference type="InterPro" id="IPR001557">
    <property type="entry name" value="L-lactate/malate_DH"/>
</dbReference>
<dbReference type="InterPro" id="IPR022383">
    <property type="entry name" value="Lactate/malate_DH_C"/>
</dbReference>
<dbReference type="InterPro" id="IPR001236">
    <property type="entry name" value="Lactate/malate_DH_N"/>
</dbReference>
<dbReference type="InterPro" id="IPR015955">
    <property type="entry name" value="Lactate_DH/Glyco_Ohase_4_C"/>
</dbReference>
<dbReference type="InterPro" id="IPR011275">
    <property type="entry name" value="Malate_DH_type3"/>
</dbReference>
<dbReference type="InterPro" id="IPR036291">
    <property type="entry name" value="NAD(P)-bd_dom_sf"/>
</dbReference>
<dbReference type="NCBIfam" id="TIGR01763">
    <property type="entry name" value="MalateDH_bact"/>
    <property type="match status" value="1"/>
</dbReference>
<dbReference type="NCBIfam" id="NF004863">
    <property type="entry name" value="PRK06223.1"/>
    <property type="match status" value="1"/>
</dbReference>
<dbReference type="PANTHER" id="PTHR43128">
    <property type="entry name" value="L-2-HYDROXYCARBOXYLATE DEHYDROGENASE (NAD(P)(+))"/>
    <property type="match status" value="1"/>
</dbReference>
<dbReference type="PANTHER" id="PTHR43128:SF16">
    <property type="entry name" value="L-LACTATE DEHYDROGENASE"/>
    <property type="match status" value="1"/>
</dbReference>
<dbReference type="Pfam" id="PF02866">
    <property type="entry name" value="Ldh_1_C"/>
    <property type="match status" value="1"/>
</dbReference>
<dbReference type="Pfam" id="PF00056">
    <property type="entry name" value="Ldh_1_N"/>
    <property type="match status" value="1"/>
</dbReference>
<dbReference type="PIRSF" id="PIRSF000102">
    <property type="entry name" value="Lac_mal_DH"/>
    <property type="match status" value="1"/>
</dbReference>
<dbReference type="PRINTS" id="PR00086">
    <property type="entry name" value="LLDHDRGNASE"/>
</dbReference>
<dbReference type="SUPFAM" id="SSF56327">
    <property type="entry name" value="LDH C-terminal domain-like"/>
    <property type="match status" value="1"/>
</dbReference>
<dbReference type="SUPFAM" id="SSF51735">
    <property type="entry name" value="NAD(P)-binding Rossmann-fold domains"/>
    <property type="match status" value="1"/>
</dbReference>
<name>MDH_RHIEC</name>